<sequence length="164" mass="18033">MNPRRKSRLYLAMVVLIGISLTTTLVLYALRSNIDLFYTPGEILQGKGERHEKPAIGQRLRIGGMVMPGSVQRDAKTLEMSFQVYDARGAVTVTYTGILPDLFREGQGVVAQGVFAEGNTVHAKEVLAKHDEKYTPPEVEEAMKENHSRPAAAYRGTNTTGNAL</sequence>
<name>CCME_YERPS</name>
<protein>
    <recommendedName>
        <fullName evidence="1">Cytochrome c-type biogenesis protein CcmE</fullName>
    </recommendedName>
    <alternativeName>
        <fullName evidence="1">Cytochrome c maturation protein E</fullName>
    </alternativeName>
    <alternativeName>
        <fullName evidence="1">Heme chaperone CcmE</fullName>
    </alternativeName>
</protein>
<comment type="function">
    <text evidence="1">Heme chaperone required for the biogenesis of c-type cytochromes. Transiently binds heme delivered by CcmC and transfers the heme to apo-cytochromes in a process facilitated by CcmF and CcmH.</text>
</comment>
<comment type="subcellular location">
    <subcellularLocation>
        <location evidence="1">Cell inner membrane</location>
        <topology evidence="1">Single-pass type II membrane protein</topology>
        <orientation evidence="1">Periplasmic side</orientation>
    </subcellularLocation>
</comment>
<comment type="similarity">
    <text evidence="1">Belongs to the CcmE/CycJ family.</text>
</comment>
<accession>Q668U2</accession>
<gene>
    <name evidence="1" type="primary">ccmE</name>
    <name evidence="1" type="synonym">cycJ</name>
    <name type="ordered locus">YPTB2645</name>
</gene>
<organism>
    <name type="scientific">Yersinia pseudotuberculosis serotype I (strain IP32953)</name>
    <dbReference type="NCBI Taxonomy" id="273123"/>
    <lineage>
        <taxon>Bacteria</taxon>
        <taxon>Pseudomonadati</taxon>
        <taxon>Pseudomonadota</taxon>
        <taxon>Gammaproteobacteria</taxon>
        <taxon>Enterobacterales</taxon>
        <taxon>Yersiniaceae</taxon>
        <taxon>Yersinia</taxon>
    </lineage>
</organism>
<proteinExistence type="inferred from homology"/>
<dbReference type="EMBL" id="BX936398">
    <property type="protein sequence ID" value="CAH21883.1"/>
    <property type="molecule type" value="Genomic_DNA"/>
</dbReference>
<dbReference type="RefSeq" id="WP_002209697.1">
    <property type="nucleotide sequence ID" value="NZ_CP009712.1"/>
</dbReference>
<dbReference type="SMR" id="Q668U2"/>
<dbReference type="GeneID" id="57975951"/>
<dbReference type="KEGG" id="ypo:BZ17_3994"/>
<dbReference type="KEGG" id="yps:YPTB2645"/>
<dbReference type="PATRIC" id="fig|273123.14.peg.4191"/>
<dbReference type="Proteomes" id="UP000001011">
    <property type="component" value="Chromosome"/>
</dbReference>
<dbReference type="GO" id="GO:0005886">
    <property type="term" value="C:plasma membrane"/>
    <property type="evidence" value="ECO:0007669"/>
    <property type="project" value="UniProtKB-SubCell"/>
</dbReference>
<dbReference type="GO" id="GO:0020037">
    <property type="term" value="F:heme binding"/>
    <property type="evidence" value="ECO:0007669"/>
    <property type="project" value="InterPro"/>
</dbReference>
<dbReference type="GO" id="GO:0046872">
    <property type="term" value="F:metal ion binding"/>
    <property type="evidence" value="ECO:0007669"/>
    <property type="project" value="UniProtKB-KW"/>
</dbReference>
<dbReference type="GO" id="GO:0017004">
    <property type="term" value="P:cytochrome complex assembly"/>
    <property type="evidence" value="ECO:0007669"/>
    <property type="project" value="UniProtKB-KW"/>
</dbReference>
<dbReference type="FunFam" id="2.40.50.140:FF:000104">
    <property type="entry name" value="Cytochrome c-type biogenesis protein CcmE"/>
    <property type="match status" value="1"/>
</dbReference>
<dbReference type="Gene3D" id="2.40.50.140">
    <property type="entry name" value="Nucleic acid-binding proteins"/>
    <property type="match status" value="1"/>
</dbReference>
<dbReference type="HAMAP" id="MF_01959">
    <property type="entry name" value="CcmE"/>
    <property type="match status" value="1"/>
</dbReference>
<dbReference type="InterPro" id="IPR004329">
    <property type="entry name" value="CcmE"/>
</dbReference>
<dbReference type="InterPro" id="IPR036127">
    <property type="entry name" value="CcmE-like_sf"/>
</dbReference>
<dbReference type="InterPro" id="IPR012340">
    <property type="entry name" value="NA-bd_OB-fold"/>
</dbReference>
<dbReference type="NCBIfam" id="NF009635">
    <property type="entry name" value="PRK13150.1"/>
    <property type="match status" value="1"/>
</dbReference>
<dbReference type="NCBIfam" id="NF009638">
    <property type="entry name" value="PRK13165.1"/>
    <property type="match status" value="1"/>
</dbReference>
<dbReference type="NCBIfam" id="NF009727">
    <property type="entry name" value="PRK13254.1-1"/>
    <property type="match status" value="1"/>
</dbReference>
<dbReference type="NCBIfam" id="NF009729">
    <property type="entry name" value="PRK13254.1-3"/>
    <property type="match status" value="1"/>
</dbReference>
<dbReference type="NCBIfam" id="NF009731">
    <property type="entry name" value="PRK13254.1-5"/>
    <property type="match status" value="1"/>
</dbReference>
<dbReference type="PANTHER" id="PTHR34128">
    <property type="entry name" value="CYTOCHROME C-TYPE BIOGENESIS PROTEIN CCME HOMOLOG, MITOCHONDRIAL"/>
    <property type="match status" value="1"/>
</dbReference>
<dbReference type="PANTHER" id="PTHR34128:SF2">
    <property type="entry name" value="CYTOCHROME C-TYPE BIOGENESIS PROTEIN CCME HOMOLOG, MITOCHONDRIAL"/>
    <property type="match status" value="1"/>
</dbReference>
<dbReference type="Pfam" id="PF03100">
    <property type="entry name" value="CcmE"/>
    <property type="match status" value="1"/>
</dbReference>
<dbReference type="SUPFAM" id="SSF82093">
    <property type="entry name" value="Heme chaperone CcmE"/>
    <property type="match status" value="1"/>
</dbReference>
<keyword id="KW-0997">Cell inner membrane</keyword>
<keyword id="KW-1003">Cell membrane</keyword>
<keyword id="KW-0201">Cytochrome c-type biogenesis</keyword>
<keyword id="KW-0349">Heme</keyword>
<keyword id="KW-0408">Iron</keyword>
<keyword id="KW-0472">Membrane</keyword>
<keyword id="KW-0479">Metal-binding</keyword>
<keyword id="KW-0735">Signal-anchor</keyword>
<keyword id="KW-0812">Transmembrane</keyword>
<keyword id="KW-1133">Transmembrane helix</keyword>
<feature type="chain" id="PRO_0000238894" description="Cytochrome c-type biogenesis protein CcmE">
    <location>
        <begin position="1"/>
        <end position="164"/>
    </location>
</feature>
<feature type="topological domain" description="Cytoplasmic" evidence="1">
    <location>
        <begin position="1"/>
        <end position="8"/>
    </location>
</feature>
<feature type="transmembrane region" description="Helical; Signal-anchor for type II membrane protein" evidence="1">
    <location>
        <begin position="9"/>
        <end position="29"/>
    </location>
</feature>
<feature type="topological domain" description="Periplasmic" evidence="1">
    <location>
        <begin position="30"/>
        <end position="164"/>
    </location>
</feature>
<feature type="region of interest" description="Disordered" evidence="2">
    <location>
        <begin position="140"/>
        <end position="164"/>
    </location>
</feature>
<feature type="binding site" description="covalent" evidence="1">
    <location>
        <position position="130"/>
    </location>
    <ligand>
        <name>heme</name>
        <dbReference type="ChEBI" id="CHEBI:30413"/>
    </ligand>
</feature>
<feature type="binding site" description="axial binding residue" evidence="1">
    <location>
        <position position="134"/>
    </location>
    <ligand>
        <name>heme</name>
        <dbReference type="ChEBI" id="CHEBI:30413"/>
    </ligand>
    <ligandPart>
        <name>Fe</name>
        <dbReference type="ChEBI" id="CHEBI:18248"/>
    </ligandPart>
</feature>
<evidence type="ECO:0000255" key="1">
    <source>
        <dbReference type="HAMAP-Rule" id="MF_01959"/>
    </source>
</evidence>
<evidence type="ECO:0000256" key="2">
    <source>
        <dbReference type="SAM" id="MobiDB-lite"/>
    </source>
</evidence>
<reference key="1">
    <citation type="journal article" date="2004" name="Proc. Natl. Acad. Sci. U.S.A.">
        <title>Insights into the evolution of Yersinia pestis through whole-genome comparison with Yersinia pseudotuberculosis.</title>
        <authorList>
            <person name="Chain P.S.G."/>
            <person name="Carniel E."/>
            <person name="Larimer F.W."/>
            <person name="Lamerdin J."/>
            <person name="Stoutland P.O."/>
            <person name="Regala W.M."/>
            <person name="Georgescu A.M."/>
            <person name="Vergez L.M."/>
            <person name="Land M.L."/>
            <person name="Motin V.L."/>
            <person name="Brubaker R.R."/>
            <person name="Fowler J."/>
            <person name="Hinnebusch J."/>
            <person name="Marceau M."/>
            <person name="Medigue C."/>
            <person name="Simonet M."/>
            <person name="Chenal-Francisque V."/>
            <person name="Souza B."/>
            <person name="Dacheux D."/>
            <person name="Elliott J.M."/>
            <person name="Derbise A."/>
            <person name="Hauser L.J."/>
            <person name="Garcia E."/>
        </authorList>
    </citation>
    <scope>NUCLEOTIDE SEQUENCE [LARGE SCALE GENOMIC DNA]</scope>
    <source>
        <strain>IP32953</strain>
    </source>
</reference>